<evidence type="ECO:0000255" key="1">
    <source>
        <dbReference type="HAMAP-Rule" id="MF_01850"/>
    </source>
</evidence>
<evidence type="ECO:0000256" key="2">
    <source>
        <dbReference type="SAM" id="MobiDB-lite"/>
    </source>
</evidence>
<gene>
    <name evidence="1" type="primary">ttcA</name>
    <name type="ordered locus">Bcenmc03_3000</name>
</gene>
<keyword id="KW-0004">4Fe-4S</keyword>
<keyword id="KW-0067">ATP-binding</keyword>
<keyword id="KW-0963">Cytoplasm</keyword>
<keyword id="KW-0408">Iron</keyword>
<keyword id="KW-0411">Iron-sulfur</keyword>
<keyword id="KW-0460">Magnesium</keyword>
<keyword id="KW-0479">Metal-binding</keyword>
<keyword id="KW-0547">Nucleotide-binding</keyword>
<keyword id="KW-0694">RNA-binding</keyword>
<keyword id="KW-0808">Transferase</keyword>
<keyword id="KW-0819">tRNA processing</keyword>
<keyword id="KW-0820">tRNA-binding</keyword>
<accession>B1JZU7</accession>
<comment type="function">
    <text evidence="1">Catalyzes the ATP-dependent 2-thiolation of cytidine in position 32 of tRNA, to form 2-thiocytidine (s(2)C32). The sulfur atoms are provided by the cysteine/cysteine desulfurase (IscS) system.</text>
</comment>
<comment type="catalytic activity">
    <reaction evidence="1">
        <text>cytidine(32) in tRNA + S-sulfanyl-L-cysteinyl-[cysteine desulfurase] + AH2 + ATP = 2-thiocytidine(32) in tRNA + L-cysteinyl-[cysteine desulfurase] + A + AMP + diphosphate + H(+)</text>
        <dbReference type="Rhea" id="RHEA:57048"/>
        <dbReference type="Rhea" id="RHEA-COMP:10288"/>
        <dbReference type="Rhea" id="RHEA-COMP:12157"/>
        <dbReference type="Rhea" id="RHEA-COMP:12158"/>
        <dbReference type="Rhea" id="RHEA-COMP:14821"/>
        <dbReference type="ChEBI" id="CHEBI:13193"/>
        <dbReference type="ChEBI" id="CHEBI:15378"/>
        <dbReference type="ChEBI" id="CHEBI:17499"/>
        <dbReference type="ChEBI" id="CHEBI:29950"/>
        <dbReference type="ChEBI" id="CHEBI:30616"/>
        <dbReference type="ChEBI" id="CHEBI:33019"/>
        <dbReference type="ChEBI" id="CHEBI:61963"/>
        <dbReference type="ChEBI" id="CHEBI:82748"/>
        <dbReference type="ChEBI" id="CHEBI:141453"/>
        <dbReference type="ChEBI" id="CHEBI:456215"/>
    </reaction>
    <physiologicalReaction direction="left-to-right" evidence="1">
        <dbReference type="Rhea" id="RHEA:57049"/>
    </physiologicalReaction>
</comment>
<comment type="cofactor">
    <cofactor evidence="1">
        <name>Mg(2+)</name>
        <dbReference type="ChEBI" id="CHEBI:18420"/>
    </cofactor>
</comment>
<comment type="cofactor">
    <cofactor evidence="1">
        <name>[4Fe-4S] cluster</name>
        <dbReference type="ChEBI" id="CHEBI:49883"/>
    </cofactor>
    <text evidence="1">Binds 1 [4Fe-4S] cluster per subunit. The cluster is chelated by three Cys residues, the fourth Fe has a free coordination site that may bind a sulfur atom transferred from the persulfide of IscS.</text>
</comment>
<comment type="pathway">
    <text evidence="1">tRNA modification.</text>
</comment>
<comment type="subunit">
    <text evidence="1">Homodimer.</text>
</comment>
<comment type="subcellular location">
    <subcellularLocation>
        <location evidence="1">Cytoplasm</location>
    </subcellularLocation>
</comment>
<comment type="miscellaneous">
    <text evidence="1">The thiolation reaction likely consists of two steps: a first activation step by ATP to form an adenylated intermediate of the target base of tRNA, and a second nucleophilic substitution step of the sulfur (S) atom supplied by the hydrosulfide attached to the Fe-S cluster.</text>
</comment>
<comment type="similarity">
    <text evidence="1">Belongs to the TtcA family.</text>
</comment>
<protein>
    <recommendedName>
        <fullName evidence="1">tRNA-cytidine(32) 2-sulfurtransferase</fullName>
        <ecNumber evidence="1">2.8.1.-</ecNumber>
    </recommendedName>
    <alternativeName>
        <fullName evidence="1">Two-thiocytidine biosynthesis protein A</fullName>
    </alternativeName>
    <alternativeName>
        <fullName evidence="1">tRNA 2-thiocytidine biosynthesis protein TtcA</fullName>
    </alternativeName>
</protein>
<reference key="1">
    <citation type="submission" date="2008-02" db="EMBL/GenBank/DDBJ databases">
        <title>Complete sequence of chromosome 1 of Burkholderia cenocepacia MC0-3.</title>
        <authorList>
            <person name="Copeland A."/>
            <person name="Lucas S."/>
            <person name="Lapidus A."/>
            <person name="Barry K."/>
            <person name="Bruce D."/>
            <person name="Goodwin L."/>
            <person name="Glavina del Rio T."/>
            <person name="Dalin E."/>
            <person name="Tice H."/>
            <person name="Pitluck S."/>
            <person name="Chain P."/>
            <person name="Malfatti S."/>
            <person name="Shin M."/>
            <person name="Vergez L."/>
            <person name="Schmutz J."/>
            <person name="Larimer F."/>
            <person name="Land M."/>
            <person name="Hauser L."/>
            <person name="Kyrpides N."/>
            <person name="Mikhailova N."/>
            <person name="Tiedje J."/>
            <person name="Richardson P."/>
        </authorList>
    </citation>
    <scope>NUCLEOTIDE SEQUENCE [LARGE SCALE GENOMIC DNA]</scope>
    <source>
        <strain>MC0-3</strain>
    </source>
</reference>
<feature type="chain" id="PRO_0000348683" description="tRNA-cytidine(32) 2-sulfurtransferase">
    <location>
        <begin position="1"/>
        <end position="331"/>
    </location>
</feature>
<feature type="region of interest" description="Disordered" evidence="2">
    <location>
        <begin position="1"/>
        <end position="33"/>
    </location>
</feature>
<feature type="short sequence motif" description="PP-loop motif" evidence="1">
    <location>
        <begin position="71"/>
        <end position="76"/>
    </location>
</feature>
<feature type="compositionally biased region" description="Low complexity" evidence="2">
    <location>
        <begin position="8"/>
        <end position="23"/>
    </location>
</feature>
<feature type="binding site" evidence="1">
    <location>
        <position position="146"/>
    </location>
    <ligand>
        <name>[4Fe-4S] cluster</name>
        <dbReference type="ChEBI" id="CHEBI:49883"/>
    </ligand>
</feature>
<feature type="binding site" evidence="1">
    <location>
        <position position="149"/>
    </location>
    <ligand>
        <name>[4Fe-4S] cluster</name>
        <dbReference type="ChEBI" id="CHEBI:49883"/>
    </ligand>
</feature>
<feature type="binding site" evidence="1">
    <location>
        <position position="237"/>
    </location>
    <ligand>
        <name>[4Fe-4S] cluster</name>
        <dbReference type="ChEBI" id="CHEBI:49883"/>
    </ligand>
</feature>
<sequence length="331" mass="36723">MNAPHMNDTAADAATLDDAAAPAGRPALTRREQKEAYENNKLFKRIVRQVGQAIGDYNMIEQGDKVMVCLSGGKDSYAMLDVLLRLRERAPIDFDIVAVNLDQKQPGFPEHVLPEYLKQVGVPFHIENQDTYSIVKRLVPEGKTTCSLCSRLRRGILYRVAGELGATKIALGHHRDDIVQTLLLNMFYGGKLKGMPPKLQSDDGKNIVIRPLAYVKETDLEKYAELREFPIIPCNLCGSQPNLKRAEMKALIRDWDKRFPGRVDNMFNALAKVVPSHLMDTTLYPFQSLRATGEADPQGDIAFDEEPCASGDDAAAPGAAQPISIVQFDDL</sequence>
<proteinExistence type="inferred from homology"/>
<name>TTCA_BURO0</name>
<organism>
    <name type="scientific">Burkholderia orbicola (strain MC0-3)</name>
    <dbReference type="NCBI Taxonomy" id="406425"/>
    <lineage>
        <taxon>Bacteria</taxon>
        <taxon>Pseudomonadati</taxon>
        <taxon>Pseudomonadota</taxon>
        <taxon>Betaproteobacteria</taxon>
        <taxon>Burkholderiales</taxon>
        <taxon>Burkholderiaceae</taxon>
        <taxon>Burkholderia</taxon>
        <taxon>Burkholderia cepacia complex</taxon>
        <taxon>Burkholderia orbicola</taxon>
    </lineage>
</organism>
<dbReference type="EC" id="2.8.1.-" evidence="1"/>
<dbReference type="EMBL" id="CP000958">
    <property type="protein sequence ID" value="ACA92158.1"/>
    <property type="molecule type" value="Genomic_DNA"/>
</dbReference>
<dbReference type="RefSeq" id="WP_012329364.1">
    <property type="nucleotide sequence ID" value="NC_010508.1"/>
</dbReference>
<dbReference type="SMR" id="B1JZU7"/>
<dbReference type="GeneID" id="83049780"/>
<dbReference type="KEGG" id="bcm:Bcenmc03_3000"/>
<dbReference type="HOGENOM" id="CLU_026481_0_0_4"/>
<dbReference type="Proteomes" id="UP000002169">
    <property type="component" value="Chromosome 1"/>
</dbReference>
<dbReference type="GO" id="GO:0005737">
    <property type="term" value="C:cytoplasm"/>
    <property type="evidence" value="ECO:0007669"/>
    <property type="project" value="UniProtKB-SubCell"/>
</dbReference>
<dbReference type="GO" id="GO:0051539">
    <property type="term" value="F:4 iron, 4 sulfur cluster binding"/>
    <property type="evidence" value="ECO:0007669"/>
    <property type="project" value="UniProtKB-UniRule"/>
</dbReference>
<dbReference type="GO" id="GO:0005524">
    <property type="term" value="F:ATP binding"/>
    <property type="evidence" value="ECO:0007669"/>
    <property type="project" value="UniProtKB-UniRule"/>
</dbReference>
<dbReference type="GO" id="GO:0000287">
    <property type="term" value="F:magnesium ion binding"/>
    <property type="evidence" value="ECO:0007669"/>
    <property type="project" value="UniProtKB-UniRule"/>
</dbReference>
<dbReference type="GO" id="GO:0016783">
    <property type="term" value="F:sulfurtransferase activity"/>
    <property type="evidence" value="ECO:0007669"/>
    <property type="project" value="UniProtKB-UniRule"/>
</dbReference>
<dbReference type="GO" id="GO:0000049">
    <property type="term" value="F:tRNA binding"/>
    <property type="evidence" value="ECO:0007669"/>
    <property type="project" value="UniProtKB-KW"/>
</dbReference>
<dbReference type="GO" id="GO:0034227">
    <property type="term" value="P:tRNA thio-modification"/>
    <property type="evidence" value="ECO:0007669"/>
    <property type="project" value="UniProtKB-UniRule"/>
</dbReference>
<dbReference type="CDD" id="cd24138">
    <property type="entry name" value="TtcA-like"/>
    <property type="match status" value="1"/>
</dbReference>
<dbReference type="Gene3D" id="3.40.50.620">
    <property type="entry name" value="HUPs"/>
    <property type="match status" value="1"/>
</dbReference>
<dbReference type="HAMAP" id="MF_01850">
    <property type="entry name" value="TtcA"/>
    <property type="match status" value="1"/>
</dbReference>
<dbReference type="InterPro" id="IPR014729">
    <property type="entry name" value="Rossmann-like_a/b/a_fold"/>
</dbReference>
<dbReference type="InterPro" id="IPR011063">
    <property type="entry name" value="TilS/TtcA_N"/>
</dbReference>
<dbReference type="InterPro" id="IPR012089">
    <property type="entry name" value="tRNA_Cyd_32_2_STrfase"/>
</dbReference>
<dbReference type="NCBIfam" id="NF007972">
    <property type="entry name" value="PRK10696.1"/>
    <property type="match status" value="1"/>
</dbReference>
<dbReference type="PANTHER" id="PTHR43686:SF1">
    <property type="entry name" value="AMINOTRAN_5 DOMAIN-CONTAINING PROTEIN"/>
    <property type="match status" value="1"/>
</dbReference>
<dbReference type="PANTHER" id="PTHR43686">
    <property type="entry name" value="SULFURTRANSFERASE-RELATED"/>
    <property type="match status" value="1"/>
</dbReference>
<dbReference type="Pfam" id="PF01171">
    <property type="entry name" value="ATP_bind_3"/>
    <property type="match status" value="1"/>
</dbReference>
<dbReference type="SUPFAM" id="SSF52402">
    <property type="entry name" value="Adenine nucleotide alpha hydrolases-like"/>
    <property type="match status" value="1"/>
</dbReference>